<feature type="chain" id="PRO_0000424490" description="Importin subunit alpha-5">
    <location>
        <begin position="1"/>
        <end position="538"/>
    </location>
</feature>
<feature type="initiator methionine" description="Removed; alternate" evidence="2">
    <location>
        <position position="1"/>
    </location>
</feature>
<feature type="chain" id="PRO_0000297527" description="Importin subunit alpha-5, N-terminally processed">
    <location>
        <begin position="2"/>
        <end position="538"/>
    </location>
</feature>
<feature type="domain" description="IBB" evidence="5">
    <location>
        <begin position="1"/>
        <end position="57"/>
    </location>
</feature>
<feature type="repeat" description="ARM 1; truncated">
    <location>
        <begin position="77"/>
        <end position="117"/>
    </location>
</feature>
<feature type="repeat" description="ARM 2">
    <location>
        <begin position="118"/>
        <end position="161"/>
    </location>
</feature>
<feature type="repeat" description="ARM 3">
    <location>
        <begin position="162"/>
        <end position="206"/>
    </location>
</feature>
<feature type="repeat" description="ARM 4">
    <location>
        <begin position="207"/>
        <end position="245"/>
    </location>
</feature>
<feature type="repeat" description="ARM 5">
    <location>
        <begin position="246"/>
        <end position="290"/>
    </location>
</feature>
<feature type="repeat" description="ARM 6">
    <location>
        <begin position="291"/>
        <end position="330"/>
    </location>
</feature>
<feature type="repeat" description="ARM 7">
    <location>
        <begin position="331"/>
        <end position="372"/>
    </location>
</feature>
<feature type="repeat" description="ARM 8">
    <location>
        <begin position="373"/>
        <end position="412"/>
    </location>
</feature>
<feature type="repeat" description="ARM 9">
    <location>
        <begin position="413"/>
        <end position="457"/>
    </location>
</feature>
<feature type="repeat" description="ARM 10; atypical">
    <location>
        <begin position="460"/>
        <end position="504"/>
    </location>
</feature>
<feature type="region of interest" description="Disordered" evidence="6">
    <location>
        <begin position="1"/>
        <end position="36"/>
    </location>
</feature>
<feature type="region of interest" description="NLS binding site (major)" evidence="1">
    <location>
        <begin position="149"/>
        <end position="241"/>
    </location>
</feature>
<feature type="region of interest" description="Binding to RAG1" evidence="2">
    <location>
        <begin position="245"/>
        <end position="437"/>
    </location>
</feature>
<feature type="region of interest" description="NLS binding site (minor)" evidence="1">
    <location>
        <begin position="318"/>
        <end position="406"/>
    </location>
</feature>
<feature type="short sequence motif" description="Nuclear localization signal" evidence="1">
    <location>
        <begin position="42"/>
        <end position="51"/>
    </location>
</feature>
<feature type="compositionally biased region" description="Basic and acidic residues" evidence="6">
    <location>
        <begin position="20"/>
        <end position="36"/>
    </location>
</feature>
<feature type="modified residue" description="N-acetylmethionine" evidence="2">
    <location>
        <position position="1"/>
    </location>
</feature>
<feature type="modified residue" description="N-acetylthreonine; in Importin subunit alpha-5, N-terminally processed" evidence="2">
    <location>
        <position position="2"/>
    </location>
</feature>
<feature type="modified residue" description="Phosphothreonine" evidence="2">
    <location>
        <position position="3"/>
    </location>
</feature>
<feature type="modified residue" description="Phosphoserine" evidence="2">
    <location>
        <position position="63"/>
    </location>
</feature>
<evidence type="ECO:0000250" key="1">
    <source>
        <dbReference type="UniProtKB" id="P52293"/>
    </source>
</evidence>
<evidence type="ECO:0000250" key="2">
    <source>
        <dbReference type="UniProtKB" id="P52294"/>
    </source>
</evidence>
<evidence type="ECO:0000250" key="3">
    <source>
        <dbReference type="UniProtKB" id="P83953"/>
    </source>
</evidence>
<evidence type="ECO:0000250" key="4">
    <source>
        <dbReference type="UniProtKB" id="Q60960"/>
    </source>
</evidence>
<evidence type="ECO:0000255" key="5">
    <source>
        <dbReference type="PROSITE-ProRule" id="PRU00561"/>
    </source>
</evidence>
<evidence type="ECO:0000256" key="6">
    <source>
        <dbReference type="SAM" id="MobiDB-lite"/>
    </source>
</evidence>
<evidence type="ECO:0000269" key="7">
    <source>
    </source>
</evidence>
<evidence type="ECO:0000305" key="8"/>
<accession>A2VE08</accession>
<reference key="1">
    <citation type="submission" date="2007-02" db="EMBL/GenBank/DDBJ databases">
        <authorList>
            <consortium name="NIH - Mammalian Gene Collection (MGC) project"/>
        </authorList>
    </citation>
    <scope>NUCLEOTIDE SEQUENCE [LARGE SCALE MRNA]</scope>
    <source>
        <strain>Hereford</strain>
        <tissue>Hypothalamus</tissue>
    </source>
</reference>
<reference key="2">
    <citation type="journal article" date="2009" name="Biol. Reprod.">
        <title>Role of importin alpha8, a new member of the importin alpha family of nuclear transport proteins, in early embryonic development in cattle.</title>
        <authorList>
            <person name="Tejomurtula J."/>
            <person name="Lee K.B."/>
            <person name="Tripurani S.K."/>
            <person name="Smith G.W."/>
            <person name="Yao J."/>
        </authorList>
    </citation>
    <scope>TISSUE SPECIFICITY</scope>
</reference>
<gene>
    <name type="primary">KPNA1</name>
</gene>
<proteinExistence type="evidence at transcript level"/>
<keyword id="KW-0007">Acetylation</keyword>
<keyword id="KW-0963">Cytoplasm</keyword>
<keyword id="KW-0539">Nucleus</keyword>
<keyword id="KW-0597">Phosphoprotein</keyword>
<keyword id="KW-0653">Protein transport</keyword>
<keyword id="KW-1185">Reference proteome</keyword>
<keyword id="KW-0677">Repeat</keyword>
<keyword id="KW-0813">Transport</keyword>
<keyword id="KW-0832">Ubl conjugation</keyword>
<organism>
    <name type="scientific">Bos taurus</name>
    <name type="common">Bovine</name>
    <dbReference type="NCBI Taxonomy" id="9913"/>
    <lineage>
        <taxon>Eukaryota</taxon>
        <taxon>Metazoa</taxon>
        <taxon>Chordata</taxon>
        <taxon>Craniata</taxon>
        <taxon>Vertebrata</taxon>
        <taxon>Euteleostomi</taxon>
        <taxon>Mammalia</taxon>
        <taxon>Eutheria</taxon>
        <taxon>Laurasiatheria</taxon>
        <taxon>Artiodactyla</taxon>
        <taxon>Ruminantia</taxon>
        <taxon>Pecora</taxon>
        <taxon>Bovidae</taxon>
        <taxon>Bovinae</taxon>
        <taxon>Bos</taxon>
    </lineage>
</organism>
<dbReference type="EMBL" id="BC133509">
    <property type="protein sequence ID" value="AAI33510.1"/>
    <property type="molecule type" value="mRNA"/>
</dbReference>
<dbReference type="RefSeq" id="NP_001075202.1">
    <property type="nucleotide sequence ID" value="NM_001081733.2"/>
</dbReference>
<dbReference type="SMR" id="A2VE08"/>
<dbReference type="FunCoup" id="A2VE08">
    <property type="interactions" value="2581"/>
</dbReference>
<dbReference type="STRING" id="9913.ENSBTAP00000014799"/>
<dbReference type="PaxDb" id="9913-ENSBTAP00000014799"/>
<dbReference type="Ensembl" id="ENSBTAT00000014799.6">
    <property type="protein sequence ID" value="ENSBTAP00000014799.5"/>
    <property type="gene ID" value="ENSBTAG00000011143.7"/>
</dbReference>
<dbReference type="GeneID" id="539679"/>
<dbReference type="KEGG" id="bta:539679"/>
<dbReference type="CTD" id="3836"/>
<dbReference type="VEuPathDB" id="HostDB:ENSBTAG00000011143"/>
<dbReference type="VGNC" id="VGNC:30700">
    <property type="gene designation" value="KPNA1"/>
</dbReference>
<dbReference type="eggNOG" id="KOG0166">
    <property type="taxonomic scope" value="Eukaryota"/>
</dbReference>
<dbReference type="GeneTree" id="ENSGT01050000244950"/>
<dbReference type="HOGENOM" id="CLU_018084_6_0_1"/>
<dbReference type="InParanoid" id="A2VE08"/>
<dbReference type="OMA" id="MVRNATW"/>
<dbReference type="OrthoDB" id="29145at2759"/>
<dbReference type="TreeFam" id="TF354205"/>
<dbReference type="Reactome" id="R-BTA-140342">
    <property type="pathway name" value="Apoptosis induced DNA fragmentation"/>
</dbReference>
<dbReference type="Reactome" id="R-BTA-68616">
    <property type="pathway name" value="Assembly of the ORC complex at the origin of replication"/>
</dbReference>
<dbReference type="Reactome" id="R-BTA-909733">
    <property type="pathway name" value="Interferon alpha/beta signaling"/>
</dbReference>
<dbReference type="Proteomes" id="UP000009136">
    <property type="component" value="Chromosome 1"/>
</dbReference>
<dbReference type="Bgee" id="ENSBTAG00000011143">
    <property type="expression patterns" value="Expressed in neutrophil and 109 other cell types or tissues"/>
</dbReference>
<dbReference type="GO" id="GO:0005737">
    <property type="term" value="C:cytoplasm"/>
    <property type="evidence" value="ECO:0007669"/>
    <property type="project" value="UniProtKB-SubCell"/>
</dbReference>
<dbReference type="GO" id="GO:0030425">
    <property type="term" value="C:dendrite"/>
    <property type="evidence" value="ECO:0000250"/>
    <property type="project" value="UniProtKB"/>
</dbReference>
<dbReference type="GO" id="GO:0005654">
    <property type="term" value="C:nucleoplasm"/>
    <property type="evidence" value="ECO:0000318"/>
    <property type="project" value="GO_Central"/>
</dbReference>
<dbReference type="GO" id="GO:0005634">
    <property type="term" value="C:nucleus"/>
    <property type="evidence" value="ECO:0000250"/>
    <property type="project" value="UniProtKB"/>
</dbReference>
<dbReference type="GO" id="GO:0045202">
    <property type="term" value="C:synapse"/>
    <property type="evidence" value="ECO:0007669"/>
    <property type="project" value="GOC"/>
</dbReference>
<dbReference type="GO" id="GO:0061608">
    <property type="term" value="F:nuclear import signal receptor activity"/>
    <property type="evidence" value="ECO:0000318"/>
    <property type="project" value="GO_Central"/>
</dbReference>
<dbReference type="GO" id="GO:0008139">
    <property type="term" value="F:nuclear localization sequence binding"/>
    <property type="evidence" value="ECO:0000318"/>
    <property type="project" value="GO_Central"/>
</dbReference>
<dbReference type="GO" id="GO:0006607">
    <property type="term" value="P:NLS-bearing protein import into nucleus"/>
    <property type="evidence" value="ECO:0000318"/>
    <property type="project" value="GO_Central"/>
</dbReference>
<dbReference type="GO" id="GO:0099527">
    <property type="term" value="P:postsynapse to nucleus signaling pathway"/>
    <property type="evidence" value="ECO:0000318"/>
    <property type="project" value="GO_Central"/>
</dbReference>
<dbReference type="FunFam" id="1.20.5.690:FF:000001">
    <property type="entry name" value="Importin subunit alpha"/>
    <property type="match status" value="1"/>
</dbReference>
<dbReference type="FunFam" id="1.25.10.10:FF:000013">
    <property type="entry name" value="Importin subunit alpha"/>
    <property type="match status" value="1"/>
</dbReference>
<dbReference type="Gene3D" id="1.20.5.690">
    <property type="entry name" value="Importin-alpha, importin-beta-binding domain"/>
    <property type="match status" value="1"/>
</dbReference>
<dbReference type="Gene3D" id="1.25.10.10">
    <property type="entry name" value="Leucine-rich Repeat Variant"/>
    <property type="match status" value="1"/>
</dbReference>
<dbReference type="InterPro" id="IPR011989">
    <property type="entry name" value="ARM-like"/>
</dbReference>
<dbReference type="InterPro" id="IPR016024">
    <property type="entry name" value="ARM-type_fold"/>
</dbReference>
<dbReference type="InterPro" id="IPR032413">
    <property type="entry name" value="Arm_3"/>
</dbReference>
<dbReference type="InterPro" id="IPR000225">
    <property type="entry name" value="Armadillo"/>
</dbReference>
<dbReference type="InterPro" id="IPR002652">
    <property type="entry name" value="Importin-a_IBB"/>
</dbReference>
<dbReference type="InterPro" id="IPR036975">
    <property type="entry name" value="Importin-a_IBB_sf"/>
</dbReference>
<dbReference type="InterPro" id="IPR024931">
    <property type="entry name" value="Importin_alpha"/>
</dbReference>
<dbReference type="PANTHER" id="PTHR23316">
    <property type="entry name" value="IMPORTIN ALPHA"/>
    <property type="match status" value="1"/>
</dbReference>
<dbReference type="Pfam" id="PF00514">
    <property type="entry name" value="Arm"/>
    <property type="match status" value="8"/>
</dbReference>
<dbReference type="Pfam" id="PF16186">
    <property type="entry name" value="Arm_3"/>
    <property type="match status" value="1"/>
</dbReference>
<dbReference type="Pfam" id="PF01749">
    <property type="entry name" value="IBB"/>
    <property type="match status" value="1"/>
</dbReference>
<dbReference type="PIRSF" id="PIRSF005673">
    <property type="entry name" value="Importin_alpha"/>
    <property type="match status" value="1"/>
</dbReference>
<dbReference type="SMART" id="SM00185">
    <property type="entry name" value="ARM"/>
    <property type="match status" value="8"/>
</dbReference>
<dbReference type="SUPFAM" id="SSF48371">
    <property type="entry name" value="ARM repeat"/>
    <property type="match status" value="1"/>
</dbReference>
<dbReference type="PROSITE" id="PS50176">
    <property type="entry name" value="ARM_REPEAT"/>
    <property type="match status" value="4"/>
</dbReference>
<dbReference type="PROSITE" id="PS51214">
    <property type="entry name" value="IBB"/>
    <property type="match status" value="1"/>
</dbReference>
<name>IMA5_BOVIN</name>
<sequence length="538" mass="60194">MTTPGKENFRLKSYKNKSLNPDEMRRRREEEGLQLRKQKREEQLFKRRNVATAEEETEEEVMSDGGFHEAQINNMEMAPGGVITSDMIEMIFSNSPEQQLSATQKFRKLLSKEPNPPIDEVISTPGVVARFVEFLKRKENCTLQFESAWVLTNIASGNSLQTRIVIQAGAVPIFIELLSSEFEDVQEQAVWALGNIAGDSTMCRDYVLDCNILPPLLQLFSKQNRLTMTRNAVWALSNLCRGKSPPPEFAKVSPCLNVLSWLLFVSDTDVLADACWALSYLSDGPNDKIQAVIDAGVCRRLVELLMHNDYKVVSPALRAVGNIVTGDDVQTQVILNCSALQSLLHLLSSPKESIKKEACWTISNITAGNRAQIQTVIDANIFPALISILQTAEFRTRKEAAWAITNATSGGSAEQIKYLVELGCIKPLCDLLTVMDSKIVQVALNGLENILRLGEQEAKRNGTGINPYCALIEEAYGLDKIEFLQSHENQEIYQKAFDLIEHYFGTEDEDSSIAPQVDLSQQQYIFQQCEAPMEGFQL</sequence>
<protein>
    <recommendedName>
        <fullName>Importin subunit alpha-5</fullName>
    </recommendedName>
    <alternativeName>
        <fullName>Karyopherin subunit alpha-1</fullName>
    </alternativeName>
    <component>
        <recommendedName>
            <fullName>Importin subunit alpha-5, N-terminally processed</fullName>
        </recommendedName>
    </component>
</protein>
<comment type="function">
    <text evidence="2">Functions in nuclear protein import as an adapter protein for nuclear receptor KPNB1. Binds specifically and directly to substrates containing either a simple or bipartite NLS motif. Docking of the importin/substrate complex to the nuclear pore complex (NPC) is mediated by KPNB1 through binding to nucleoporin FxFG repeats and the complex is subsequently translocated through the pore by an energy requiring, Ran-dependent mechanism. At the nucleoplasmic side of the NPC, Ran binds to importin-beta and the three components separate and importin-alpha and -beta are re-exported from the nucleus to the cytoplasm where GTP hydrolysis releases Ran from importin. The directionality of nuclear import is thought to be conferred by an asymmetric distribution of the GTP- and GDP-bound forms of Ran between the cytoplasm and nucleus. Mediator of PR-DUB complex component BAP1 nuclear import; acts redundantly with KPNA2 and Transportin-1/TNPO1 (By similarity).</text>
</comment>
<comment type="subunit">
    <text evidence="2 3 4">Heterodimer; with KPNB1 (By similarity). Interacts with ANP32E (By similarity). Interacts with ZIC3 (By similarity). Interacts with NSMF; the interaction occurs in a calcium-independent manner after synaptic NMDA receptor stimulation and is required for nuclear import of NSMF but is competed by CABP1 (By similarity). Interacts with APEX1. Interacts with RAG1. Interacts with CTNNBL1 (via its N-terminal). Interacts with AICDA (via its NLS). Interacts with SNAI1 (via zinc fingers). Interacts with DCAF8. Interacts with ITSN1 isoform 2 (By similarity). Interacts with TALDO1 isoform 1 (By similarity). Interacts with the AMPK-mediated 'Ser-659' phosphorylated form of ACSS2; this interaction results in nuclear translocation of ACSS2 (By similarity). Interacts with BAP1 (via C-terminus); the interaction contributes to BAP1 nuclear localization (By similarity).</text>
</comment>
<comment type="subcellular location">
    <subcellularLocation>
        <location evidence="2">Cytoplasm</location>
    </subcellularLocation>
    <subcellularLocation>
        <location evidence="2">Nucleus</location>
    </subcellularLocation>
</comment>
<comment type="tissue specificity">
    <text evidence="7">Widely expressed.</text>
</comment>
<comment type="domain">
    <text evidence="2">Consists of an N-terminal hydrophilic region, a hydrophobic central region composed of 10 repeats, and a short hydrophilic C-terminus. The N-terminal hydrophilic region contains the importin beta binding domain (IBB domain), which is sufficient for binding importin beta and essential for nuclear protein import.</text>
</comment>
<comment type="domain">
    <text evidence="1">The IBB domain is thought to act as an intrasteric autoregulatory sequence by interacting with the internal autoinhibitory NLS. Binding of KPNB1 probably overlaps the internal NLS and contributes to a high affinity for cytoplasmic NLS-containing cargo substrates. After dissociation of the importin/substrate complex in the nucleus the internal autohibitory NLS contributes to a low affinity for nuclear NLS-containing proteins (By similarity).</text>
</comment>
<comment type="domain">
    <text evidence="1">The major and minor NLS binding sites are mainly involved in recognition of simple or bipartite NLS motifs. Structurally located within in a helical surface groove they contain several conserved Trp and Asn residues of the corresponding third helices (H3) of ARM repeats which mainly contribute to binding (By similarity).</text>
</comment>
<comment type="PTM">
    <text evidence="2">Polyubiquitinated in the presence of RAG1 (in vitro).</text>
</comment>
<comment type="similarity">
    <text evidence="8">Belongs to the importin alpha family.</text>
</comment>